<reference key="1">
    <citation type="journal article" date="2011" name="J. Bacteriol.">
        <title>Comparative genomics of 28 Salmonella enterica isolates: evidence for CRISPR-mediated adaptive sublineage evolution.</title>
        <authorList>
            <person name="Fricke W.F."/>
            <person name="Mammel M.K."/>
            <person name="McDermott P.F."/>
            <person name="Tartera C."/>
            <person name="White D.G."/>
            <person name="Leclerc J.E."/>
            <person name="Ravel J."/>
            <person name="Cebula T.A."/>
        </authorList>
    </citation>
    <scope>NUCLEOTIDE SEQUENCE [LARGE SCALE GENOMIC DNA]</scope>
    <source>
        <strain>CVM19633</strain>
    </source>
</reference>
<proteinExistence type="inferred from homology"/>
<name>ARAB_SALSV</name>
<feature type="chain" id="PRO_1000127643" description="Ribulokinase">
    <location>
        <begin position="1"/>
        <end position="569"/>
    </location>
</feature>
<evidence type="ECO:0000255" key="1">
    <source>
        <dbReference type="HAMAP-Rule" id="MF_00520"/>
    </source>
</evidence>
<gene>
    <name evidence="1" type="primary">araB</name>
    <name type="ordered locus">SeSA_A0114</name>
</gene>
<keyword id="KW-0054">Arabinose catabolism</keyword>
<keyword id="KW-0067">ATP-binding</keyword>
<keyword id="KW-0119">Carbohydrate metabolism</keyword>
<keyword id="KW-0418">Kinase</keyword>
<keyword id="KW-0547">Nucleotide-binding</keyword>
<keyword id="KW-0808">Transferase</keyword>
<protein>
    <recommendedName>
        <fullName evidence="1">Ribulokinase</fullName>
        <ecNumber evidence="1">2.7.1.16</ecNumber>
    </recommendedName>
</protein>
<accession>B4TWU9</accession>
<dbReference type="EC" id="2.7.1.16" evidence="1"/>
<dbReference type="EMBL" id="CP001127">
    <property type="protein sequence ID" value="ACF91969.1"/>
    <property type="molecule type" value="Genomic_DNA"/>
</dbReference>
<dbReference type="RefSeq" id="WP_000951817.1">
    <property type="nucleotide sequence ID" value="NC_011094.1"/>
</dbReference>
<dbReference type="SMR" id="B4TWU9"/>
<dbReference type="KEGG" id="sew:SeSA_A0114"/>
<dbReference type="HOGENOM" id="CLU_009281_9_1_6"/>
<dbReference type="UniPathway" id="UPA00145">
    <property type="reaction ID" value="UER00566"/>
</dbReference>
<dbReference type="Proteomes" id="UP000001865">
    <property type="component" value="Chromosome"/>
</dbReference>
<dbReference type="GO" id="GO:0005737">
    <property type="term" value="C:cytoplasm"/>
    <property type="evidence" value="ECO:0007669"/>
    <property type="project" value="TreeGrafter"/>
</dbReference>
<dbReference type="GO" id="GO:0005524">
    <property type="term" value="F:ATP binding"/>
    <property type="evidence" value="ECO:0007669"/>
    <property type="project" value="UniProtKB-KW"/>
</dbReference>
<dbReference type="GO" id="GO:0019150">
    <property type="term" value="F:D-ribulokinase activity"/>
    <property type="evidence" value="ECO:0007669"/>
    <property type="project" value="TreeGrafter"/>
</dbReference>
<dbReference type="GO" id="GO:0008741">
    <property type="term" value="F:ribulokinase activity"/>
    <property type="evidence" value="ECO:0007669"/>
    <property type="project" value="UniProtKB-UniRule"/>
</dbReference>
<dbReference type="GO" id="GO:0019569">
    <property type="term" value="P:L-arabinose catabolic process to xylulose 5-phosphate"/>
    <property type="evidence" value="ECO:0007669"/>
    <property type="project" value="UniProtKB-UniRule"/>
</dbReference>
<dbReference type="CDD" id="cd07781">
    <property type="entry name" value="ASKHA_NBD_FGGY_L-RBK"/>
    <property type="match status" value="1"/>
</dbReference>
<dbReference type="Gene3D" id="1.20.58.2240">
    <property type="match status" value="1"/>
</dbReference>
<dbReference type="Gene3D" id="3.30.420.40">
    <property type="match status" value="1"/>
</dbReference>
<dbReference type="HAMAP" id="MF_00520">
    <property type="entry name" value="Ribulokinase"/>
    <property type="match status" value="1"/>
</dbReference>
<dbReference type="InterPro" id="IPR043129">
    <property type="entry name" value="ATPase_NBD"/>
</dbReference>
<dbReference type="InterPro" id="IPR018485">
    <property type="entry name" value="FGGY_C"/>
</dbReference>
<dbReference type="InterPro" id="IPR005929">
    <property type="entry name" value="Ribulokinase"/>
</dbReference>
<dbReference type="NCBIfam" id="TIGR01234">
    <property type="entry name" value="L-ribulokinase"/>
    <property type="match status" value="1"/>
</dbReference>
<dbReference type="NCBIfam" id="NF003154">
    <property type="entry name" value="PRK04123.1"/>
    <property type="match status" value="1"/>
</dbReference>
<dbReference type="PANTHER" id="PTHR43435:SF4">
    <property type="entry name" value="FGGY CARBOHYDRATE KINASE DOMAIN-CONTAINING PROTEIN"/>
    <property type="match status" value="1"/>
</dbReference>
<dbReference type="PANTHER" id="PTHR43435">
    <property type="entry name" value="RIBULOKINASE"/>
    <property type="match status" value="1"/>
</dbReference>
<dbReference type="Pfam" id="PF02782">
    <property type="entry name" value="FGGY_C"/>
    <property type="match status" value="1"/>
</dbReference>
<dbReference type="SUPFAM" id="SSF53067">
    <property type="entry name" value="Actin-like ATPase domain"/>
    <property type="match status" value="2"/>
</dbReference>
<organism>
    <name type="scientific">Salmonella schwarzengrund (strain CVM19633)</name>
    <dbReference type="NCBI Taxonomy" id="439843"/>
    <lineage>
        <taxon>Bacteria</taxon>
        <taxon>Pseudomonadati</taxon>
        <taxon>Pseudomonadota</taxon>
        <taxon>Gammaproteobacteria</taxon>
        <taxon>Enterobacterales</taxon>
        <taxon>Enterobacteriaceae</taxon>
        <taxon>Salmonella</taxon>
    </lineage>
</organism>
<comment type="catalytic activity">
    <reaction evidence="1">
        <text>D-ribulose + ATP = D-ribulose 5-phosphate + ADP + H(+)</text>
        <dbReference type="Rhea" id="RHEA:17601"/>
        <dbReference type="ChEBI" id="CHEBI:15378"/>
        <dbReference type="ChEBI" id="CHEBI:17173"/>
        <dbReference type="ChEBI" id="CHEBI:30616"/>
        <dbReference type="ChEBI" id="CHEBI:58121"/>
        <dbReference type="ChEBI" id="CHEBI:456216"/>
        <dbReference type="EC" id="2.7.1.16"/>
    </reaction>
</comment>
<comment type="catalytic activity">
    <reaction evidence="1">
        <text>L-ribulose + ATP = L-ribulose 5-phosphate + ADP + H(+)</text>
        <dbReference type="Rhea" id="RHEA:22072"/>
        <dbReference type="ChEBI" id="CHEBI:15378"/>
        <dbReference type="ChEBI" id="CHEBI:16880"/>
        <dbReference type="ChEBI" id="CHEBI:30616"/>
        <dbReference type="ChEBI" id="CHEBI:58226"/>
        <dbReference type="ChEBI" id="CHEBI:456216"/>
        <dbReference type="EC" id="2.7.1.16"/>
    </reaction>
</comment>
<comment type="pathway">
    <text evidence="1">Carbohydrate degradation; L-arabinose degradation via L-ribulose; D-xylulose 5-phosphate from L-arabinose (bacterial route): step 2/3.</text>
</comment>
<comment type="similarity">
    <text evidence="1">Belongs to the ribulokinase family.</text>
</comment>
<sequence>MAIAIGLDFGSDSVRALAVDCATGDEIATSVEWYPRWQEGRYCDGPNNQFRHHPRDYMESMEAALKAVLAQLSAAQRANVVGIGVDSTGSTPAPIDADGNVLALRPEFAENPNAMFVLWKDHTAVEEADEITRLCHKPGKVDYSRYIGGIYSSEWFWAKILHVTRQDSAVAQAAVSWIELCDWVPALLSGTTRPQDIRRGRCSAGHKTLWHESWGGLPPASFFDELDPCINRHLRYPLFSETFTADLPVGTLCAEWAQRLGLPESVVISGGAFDCHMGAVGAGAQPNTLVKVIGTSTCDILIADKQSVGDRAVKGICGQVDGSVVPNFIGLEAGQSAFGDIYAWFSRVLSWPLEQLAAQHPELKTQINASQKQLLPALTDAWAKNPSLDHLPVVLDWFNGRRTPNANQRLKGVITDLNLATDAPALFGGLVASTAFGARAIQECFTDQGIAVNNVMALGGIARKNQVIMQVCCDVLNRPLQIVASDQCCALGAAIFAAVAAKVHADIPAAQQSMASAVERTLRPRPEQAQRLEQLYRRYQQWALSAEQHYLPTAAPAPTTPANQAILTH</sequence>